<gene>
    <name evidence="2" type="primary">infB</name>
    <name type="ordered locus">Ctha_0467</name>
</gene>
<comment type="function">
    <text evidence="2">One of the essential components for the initiation of protein synthesis. Protects formylmethionyl-tRNA from spontaneous hydrolysis and promotes its binding to the 30S ribosomal subunits. Also involved in the hydrolysis of GTP during the formation of the 70S ribosomal complex.</text>
</comment>
<comment type="subcellular location">
    <subcellularLocation>
        <location evidence="2">Cytoplasm</location>
    </subcellularLocation>
</comment>
<comment type="similarity">
    <text evidence="2">Belongs to the TRAFAC class translation factor GTPase superfamily. Classic translation factor GTPase family. IF-2 subfamily.</text>
</comment>
<evidence type="ECO:0000250" key="1"/>
<evidence type="ECO:0000255" key="2">
    <source>
        <dbReference type="HAMAP-Rule" id="MF_00100"/>
    </source>
</evidence>
<evidence type="ECO:0000256" key="3">
    <source>
        <dbReference type="SAM" id="MobiDB-lite"/>
    </source>
</evidence>
<keyword id="KW-0963">Cytoplasm</keyword>
<keyword id="KW-0342">GTP-binding</keyword>
<keyword id="KW-0396">Initiation factor</keyword>
<keyword id="KW-0547">Nucleotide-binding</keyword>
<keyword id="KW-0648">Protein biosynthesis</keyword>
<keyword id="KW-1185">Reference proteome</keyword>
<reference key="1">
    <citation type="submission" date="2008-06" db="EMBL/GenBank/DDBJ databases">
        <title>Complete sequence of Chloroherpeton thalassium ATCC 35110.</title>
        <authorList>
            <consortium name="US DOE Joint Genome Institute"/>
            <person name="Lucas S."/>
            <person name="Copeland A."/>
            <person name="Lapidus A."/>
            <person name="Glavina del Rio T."/>
            <person name="Dalin E."/>
            <person name="Tice H."/>
            <person name="Bruce D."/>
            <person name="Goodwin L."/>
            <person name="Pitluck S."/>
            <person name="Schmutz J."/>
            <person name="Larimer F."/>
            <person name="Land M."/>
            <person name="Hauser L."/>
            <person name="Kyrpides N."/>
            <person name="Mikhailova N."/>
            <person name="Liu Z."/>
            <person name="Li T."/>
            <person name="Zhao F."/>
            <person name="Overmann J."/>
            <person name="Bryant D.A."/>
            <person name="Richardson P."/>
        </authorList>
    </citation>
    <scope>NUCLEOTIDE SEQUENCE [LARGE SCALE GENOMIC DNA]</scope>
    <source>
        <strain>ATCC 35110 / GB-78</strain>
    </source>
</reference>
<accession>B3QUN2</accession>
<organism>
    <name type="scientific">Chloroherpeton thalassium (strain ATCC 35110 / GB-78)</name>
    <dbReference type="NCBI Taxonomy" id="517418"/>
    <lineage>
        <taxon>Bacteria</taxon>
        <taxon>Pseudomonadati</taxon>
        <taxon>Chlorobiota</taxon>
        <taxon>Chlorobiia</taxon>
        <taxon>Chlorobiales</taxon>
        <taxon>Chloroherpetonaceae</taxon>
        <taxon>Chloroherpeton</taxon>
    </lineage>
</organism>
<protein>
    <recommendedName>
        <fullName evidence="2">Translation initiation factor IF-2</fullName>
    </recommendedName>
</protein>
<name>IF2_CHLT3</name>
<dbReference type="EMBL" id="CP001100">
    <property type="protein sequence ID" value="ACF12938.1"/>
    <property type="molecule type" value="Genomic_DNA"/>
</dbReference>
<dbReference type="RefSeq" id="WP_012499022.1">
    <property type="nucleotide sequence ID" value="NC_011026.1"/>
</dbReference>
<dbReference type="SMR" id="B3QUN2"/>
<dbReference type="STRING" id="517418.Ctha_0467"/>
<dbReference type="KEGG" id="cts:Ctha_0467"/>
<dbReference type="eggNOG" id="COG0532">
    <property type="taxonomic scope" value="Bacteria"/>
</dbReference>
<dbReference type="HOGENOM" id="CLU_006301_0_1_10"/>
<dbReference type="OrthoDB" id="9811804at2"/>
<dbReference type="Proteomes" id="UP000001208">
    <property type="component" value="Chromosome"/>
</dbReference>
<dbReference type="GO" id="GO:0005737">
    <property type="term" value="C:cytoplasm"/>
    <property type="evidence" value="ECO:0007669"/>
    <property type="project" value="UniProtKB-SubCell"/>
</dbReference>
<dbReference type="GO" id="GO:0005525">
    <property type="term" value="F:GTP binding"/>
    <property type="evidence" value="ECO:0007669"/>
    <property type="project" value="UniProtKB-KW"/>
</dbReference>
<dbReference type="GO" id="GO:0003924">
    <property type="term" value="F:GTPase activity"/>
    <property type="evidence" value="ECO:0007669"/>
    <property type="project" value="UniProtKB-UniRule"/>
</dbReference>
<dbReference type="GO" id="GO:0003743">
    <property type="term" value="F:translation initiation factor activity"/>
    <property type="evidence" value="ECO:0007669"/>
    <property type="project" value="UniProtKB-UniRule"/>
</dbReference>
<dbReference type="CDD" id="cd01887">
    <property type="entry name" value="IF2_eIF5B"/>
    <property type="match status" value="1"/>
</dbReference>
<dbReference type="CDD" id="cd03702">
    <property type="entry name" value="IF2_mtIF2_II"/>
    <property type="match status" value="1"/>
</dbReference>
<dbReference type="CDD" id="cd03692">
    <property type="entry name" value="mtIF2_IVc"/>
    <property type="match status" value="1"/>
</dbReference>
<dbReference type="FunFam" id="2.40.30.10:FF:000008">
    <property type="entry name" value="Translation initiation factor IF-2"/>
    <property type="match status" value="1"/>
</dbReference>
<dbReference type="FunFam" id="2.40.30.10:FF:000054">
    <property type="entry name" value="Translation initiation factor IF-2"/>
    <property type="match status" value="1"/>
</dbReference>
<dbReference type="FunFam" id="3.40.50.10050:FF:000001">
    <property type="entry name" value="Translation initiation factor IF-2"/>
    <property type="match status" value="1"/>
</dbReference>
<dbReference type="FunFam" id="3.40.50.300:FF:000019">
    <property type="entry name" value="Translation initiation factor IF-2"/>
    <property type="match status" value="1"/>
</dbReference>
<dbReference type="Gene3D" id="3.40.50.300">
    <property type="entry name" value="P-loop containing nucleotide triphosphate hydrolases"/>
    <property type="match status" value="1"/>
</dbReference>
<dbReference type="Gene3D" id="2.40.30.10">
    <property type="entry name" value="Translation factors"/>
    <property type="match status" value="2"/>
</dbReference>
<dbReference type="Gene3D" id="3.40.50.10050">
    <property type="entry name" value="Translation initiation factor IF- 2, domain 3"/>
    <property type="match status" value="1"/>
</dbReference>
<dbReference type="HAMAP" id="MF_00100_B">
    <property type="entry name" value="IF_2_B"/>
    <property type="match status" value="1"/>
</dbReference>
<dbReference type="InterPro" id="IPR053905">
    <property type="entry name" value="EF-G-like_DII"/>
</dbReference>
<dbReference type="InterPro" id="IPR044145">
    <property type="entry name" value="IF2_II"/>
</dbReference>
<dbReference type="InterPro" id="IPR006847">
    <property type="entry name" value="IF2_N"/>
</dbReference>
<dbReference type="InterPro" id="IPR027417">
    <property type="entry name" value="P-loop_NTPase"/>
</dbReference>
<dbReference type="InterPro" id="IPR005225">
    <property type="entry name" value="Small_GTP-bd"/>
</dbReference>
<dbReference type="InterPro" id="IPR000795">
    <property type="entry name" value="T_Tr_GTP-bd_dom"/>
</dbReference>
<dbReference type="InterPro" id="IPR000178">
    <property type="entry name" value="TF_IF2_bacterial-like"/>
</dbReference>
<dbReference type="InterPro" id="IPR015760">
    <property type="entry name" value="TIF_IF2"/>
</dbReference>
<dbReference type="InterPro" id="IPR023115">
    <property type="entry name" value="TIF_IF2_dom3"/>
</dbReference>
<dbReference type="InterPro" id="IPR036925">
    <property type="entry name" value="TIF_IF2_dom3_sf"/>
</dbReference>
<dbReference type="InterPro" id="IPR009000">
    <property type="entry name" value="Transl_B-barrel_sf"/>
</dbReference>
<dbReference type="NCBIfam" id="TIGR00487">
    <property type="entry name" value="IF-2"/>
    <property type="match status" value="1"/>
</dbReference>
<dbReference type="NCBIfam" id="TIGR00231">
    <property type="entry name" value="small_GTP"/>
    <property type="match status" value="1"/>
</dbReference>
<dbReference type="PANTHER" id="PTHR43381:SF5">
    <property type="entry name" value="TR-TYPE G DOMAIN-CONTAINING PROTEIN"/>
    <property type="match status" value="1"/>
</dbReference>
<dbReference type="PANTHER" id="PTHR43381">
    <property type="entry name" value="TRANSLATION INITIATION FACTOR IF-2-RELATED"/>
    <property type="match status" value="1"/>
</dbReference>
<dbReference type="Pfam" id="PF22042">
    <property type="entry name" value="EF-G_D2"/>
    <property type="match status" value="1"/>
</dbReference>
<dbReference type="Pfam" id="PF00009">
    <property type="entry name" value="GTP_EFTU"/>
    <property type="match status" value="1"/>
</dbReference>
<dbReference type="Pfam" id="PF11987">
    <property type="entry name" value="IF-2"/>
    <property type="match status" value="1"/>
</dbReference>
<dbReference type="Pfam" id="PF04760">
    <property type="entry name" value="IF2_N"/>
    <property type="match status" value="1"/>
</dbReference>
<dbReference type="SUPFAM" id="SSF52156">
    <property type="entry name" value="Initiation factor IF2/eIF5b, domain 3"/>
    <property type="match status" value="1"/>
</dbReference>
<dbReference type="SUPFAM" id="SSF52540">
    <property type="entry name" value="P-loop containing nucleoside triphosphate hydrolases"/>
    <property type="match status" value="1"/>
</dbReference>
<dbReference type="SUPFAM" id="SSF50447">
    <property type="entry name" value="Translation proteins"/>
    <property type="match status" value="2"/>
</dbReference>
<dbReference type="PROSITE" id="PS51722">
    <property type="entry name" value="G_TR_2"/>
    <property type="match status" value="1"/>
</dbReference>
<dbReference type="PROSITE" id="PS01176">
    <property type="entry name" value="IF2"/>
    <property type="match status" value="1"/>
</dbReference>
<feature type="chain" id="PRO_1000093771" description="Translation initiation factor IF-2">
    <location>
        <begin position="1"/>
        <end position="1097"/>
    </location>
</feature>
<feature type="domain" description="tr-type G">
    <location>
        <begin position="591"/>
        <end position="761"/>
    </location>
</feature>
<feature type="region of interest" description="Disordered" evidence="3">
    <location>
        <begin position="79"/>
        <end position="458"/>
    </location>
</feature>
<feature type="region of interest" description="G1" evidence="1">
    <location>
        <begin position="600"/>
        <end position="607"/>
    </location>
</feature>
<feature type="region of interest" description="G2" evidence="1">
    <location>
        <begin position="625"/>
        <end position="629"/>
    </location>
</feature>
<feature type="region of interest" description="G3" evidence="1">
    <location>
        <begin position="647"/>
        <end position="650"/>
    </location>
</feature>
<feature type="region of interest" description="G4" evidence="1">
    <location>
        <begin position="701"/>
        <end position="704"/>
    </location>
</feature>
<feature type="region of interest" description="G5" evidence="1">
    <location>
        <begin position="737"/>
        <end position="739"/>
    </location>
</feature>
<feature type="compositionally biased region" description="Basic and acidic residues" evidence="3">
    <location>
        <begin position="97"/>
        <end position="112"/>
    </location>
</feature>
<feature type="compositionally biased region" description="Low complexity" evidence="3">
    <location>
        <begin position="157"/>
        <end position="173"/>
    </location>
</feature>
<feature type="compositionally biased region" description="Basic and acidic residues" evidence="3">
    <location>
        <begin position="174"/>
        <end position="190"/>
    </location>
</feature>
<feature type="compositionally biased region" description="Basic and acidic residues" evidence="3">
    <location>
        <begin position="202"/>
        <end position="221"/>
    </location>
</feature>
<feature type="compositionally biased region" description="Low complexity" evidence="3">
    <location>
        <begin position="224"/>
        <end position="236"/>
    </location>
</feature>
<feature type="compositionally biased region" description="Polar residues" evidence="3">
    <location>
        <begin position="258"/>
        <end position="267"/>
    </location>
</feature>
<feature type="compositionally biased region" description="Basic and acidic residues" evidence="3">
    <location>
        <begin position="268"/>
        <end position="286"/>
    </location>
</feature>
<feature type="compositionally biased region" description="Polar residues" evidence="3">
    <location>
        <begin position="340"/>
        <end position="363"/>
    </location>
</feature>
<feature type="compositionally biased region" description="Basic residues" evidence="3">
    <location>
        <begin position="376"/>
        <end position="385"/>
    </location>
</feature>
<feature type="compositionally biased region" description="Basic and acidic residues" evidence="3">
    <location>
        <begin position="402"/>
        <end position="443"/>
    </location>
</feature>
<feature type="binding site" evidence="2">
    <location>
        <begin position="600"/>
        <end position="607"/>
    </location>
    <ligand>
        <name>GTP</name>
        <dbReference type="ChEBI" id="CHEBI:37565"/>
    </ligand>
</feature>
<feature type="binding site" evidence="2">
    <location>
        <begin position="647"/>
        <end position="651"/>
    </location>
    <ligand>
        <name>GTP</name>
        <dbReference type="ChEBI" id="CHEBI:37565"/>
    </ligand>
</feature>
<feature type="binding site" evidence="2">
    <location>
        <begin position="701"/>
        <end position="704"/>
    </location>
    <ligand>
        <name>GTP</name>
        <dbReference type="ChEBI" id="CHEBI:37565"/>
    </ligand>
</feature>
<sequence>MPAEKEKKKHKLIDIAVELQVSLDDIRSFVEELGYRTTNSTKVTDSVKELILDNYSDEKKKSDLHKKLKAEKNRKIQLLEKRVSPQADKFSKKKTAAKKEASQEKADAHAKLEPSIPEEAPAAIDIDDTPEVAPEIEIPSQNTQEPEPVEMDEVASAATLAVEEAPIAAAPTEEPMHNSEAELPESKIDSAEAVAEEAAPEVEVHLEPKEQEVQELNHAEEAETPTTEASSEETSAVMTKEGDSNDAQPFTQHEPVSRKTQNTTNVSEENKQHEKQPETLKSDKAMDVVQPVPIAEETAEQQLTEASSYEKKETNLQGENLETNEADAAQTEAKDDDAQSDSLQAEISRQQNEISNRFSQSENIAGLKVFGEIELHKKKRKRKKNFREQAKDLKQQMTPEQPKQEEKPVKKEKPKEREKPAAGKKEQTPGKKPVREDQKERVLQDGPARVIKKKPKKAVDEKVVDRNIRQTMMTMDDTNDSSARQKFRKIRKRERLREQEIEAAAKEAESKVLKITEFASTHELADMLGVTPKEVIQKCFKLGKFITINQRLDKETIELLSLEFNYEVHFISDVEATEIDDDPDLPEDMKTRPPVVTIMGHVDHGKTSLLDYIRNSNVVAGESGGITQHMGAYEVTLENKQRLTFLDTPGHEAFTAMRARGAQVTDVVILVVAADDNVMPQTVEAINHAKAAEVPIIVAINKIDKPDANPEKIRTQLADIGVLVEDWGGSVQCQEISAKKGTGVRDLIDKVLVEAELLELKANYSEDKLSRGVVIEAELDKGKGVIATILVQTGIINVGMPFVAGGSSGRIRAMLDERGNRLETVYPSQPVRILGFEELPQAGDLFSIMPSDREAREIAQRRQVIRREHEFRHSSRVKLNDIAKQVQEGQVQELRVIIKADTDGSIQALADGLMKVQTDEVKVEVIHRGVGQITETDVLLAAASDAIIIGFRVRPNVNAKKLAEKEEIDIRFYSVIYHVLEDIHDALEGMLSPELQEKVTATVEIRDIFRISKIGNVAGCHVLDGKINRDSRVRLLRDGIQIYEGVLDSLKRHKDDVKEVDSGYDCGLTLKNYDDIKVNDIVESFETVETKRKLVVS</sequence>
<proteinExistence type="inferred from homology"/>